<gene>
    <name evidence="12" type="primary">NAC013</name>
    <name evidence="8" type="synonym">NTL1</name>
    <name evidence="10" type="ordered locus">At1g32870</name>
    <name evidence="11" type="ORF">F9L11.7</name>
</gene>
<organism>
    <name type="scientific">Arabidopsis thaliana</name>
    <name type="common">Mouse-ear cress</name>
    <dbReference type="NCBI Taxonomy" id="3702"/>
    <lineage>
        <taxon>Eukaryota</taxon>
        <taxon>Viridiplantae</taxon>
        <taxon>Streptophyta</taxon>
        <taxon>Embryophyta</taxon>
        <taxon>Tracheophyta</taxon>
        <taxon>Spermatophyta</taxon>
        <taxon>Magnoliopsida</taxon>
        <taxon>eudicotyledons</taxon>
        <taxon>Gunneridae</taxon>
        <taxon>Pentapetalae</taxon>
        <taxon>rosids</taxon>
        <taxon>malvids</taxon>
        <taxon>Brassicales</taxon>
        <taxon>Brassicaceae</taxon>
        <taxon>Camelineae</taxon>
        <taxon>Arabidopsis</taxon>
    </lineage>
</organism>
<reference key="1">
    <citation type="journal article" date="2000" name="Nature">
        <title>Sequence and analysis of chromosome 1 of the plant Arabidopsis thaliana.</title>
        <authorList>
            <person name="Theologis A."/>
            <person name="Ecker J.R."/>
            <person name="Palm C.J."/>
            <person name="Federspiel N.A."/>
            <person name="Kaul S."/>
            <person name="White O."/>
            <person name="Alonso J."/>
            <person name="Altafi H."/>
            <person name="Araujo R."/>
            <person name="Bowman C.L."/>
            <person name="Brooks S.Y."/>
            <person name="Buehler E."/>
            <person name="Chan A."/>
            <person name="Chao Q."/>
            <person name="Chen H."/>
            <person name="Cheuk R.F."/>
            <person name="Chin C.W."/>
            <person name="Chung M.K."/>
            <person name="Conn L."/>
            <person name="Conway A.B."/>
            <person name="Conway A.R."/>
            <person name="Creasy T.H."/>
            <person name="Dewar K."/>
            <person name="Dunn P."/>
            <person name="Etgu P."/>
            <person name="Feldblyum T.V."/>
            <person name="Feng J.-D."/>
            <person name="Fong B."/>
            <person name="Fujii C.Y."/>
            <person name="Gill J.E."/>
            <person name="Goldsmith A.D."/>
            <person name="Haas B."/>
            <person name="Hansen N.F."/>
            <person name="Hughes B."/>
            <person name="Huizar L."/>
            <person name="Hunter J.L."/>
            <person name="Jenkins J."/>
            <person name="Johnson-Hopson C."/>
            <person name="Khan S."/>
            <person name="Khaykin E."/>
            <person name="Kim C.J."/>
            <person name="Koo H.L."/>
            <person name="Kremenetskaia I."/>
            <person name="Kurtz D.B."/>
            <person name="Kwan A."/>
            <person name="Lam B."/>
            <person name="Langin-Hooper S."/>
            <person name="Lee A."/>
            <person name="Lee J.M."/>
            <person name="Lenz C.A."/>
            <person name="Li J.H."/>
            <person name="Li Y.-P."/>
            <person name="Lin X."/>
            <person name="Liu S.X."/>
            <person name="Liu Z.A."/>
            <person name="Luros J.S."/>
            <person name="Maiti R."/>
            <person name="Marziali A."/>
            <person name="Militscher J."/>
            <person name="Miranda M."/>
            <person name="Nguyen M."/>
            <person name="Nierman W.C."/>
            <person name="Osborne B.I."/>
            <person name="Pai G."/>
            <person name="Peterson J."/>
            <person name="Pham P.K."/>
            <person name="Rizzo M."/>
            <person name="Rooney T."/>
            <person name="Rowley D."/>
            <person name="Sakano H."/>
            <person name="Salzberg S.L."/>
            <person name="Schwartz J.R."/>
            <person name="Shinn P."/>
            <person name="Southwick A.M."/>
            <person name="Sun H."/>
            <person name="Tallon L.J."/>
            <person name="Tambunga G."/>
            <person name="Toriumi M.J."/>
            <person name="Town C.D."/>
            <person name="Utterback T."/>
            <person name="Van Aken S."/>
            <person name="Vaysberg M."/>
            <person name="Vysotskaia V.S."/>
            <person name="Walker M."/>
            <person name="Wu D."/>
            <person name="Yu G."/>
            <person name="Fraser C.M."/>
            <person name="Venter J.C."/>
            <person name="Davis R.W."/>
        </authorList>
    </citation>
    <scope>NUCLEOTIDE SEQUENCE [LARGE SCALE GENOMIC DNA]</scope>
    <source>
        <strain>cv. Columbia</strain>
    </source>
</reference>
<reference key="2">
    <citation type="journal article" date="2017" name="Plant J.">
        <title>Araport11: a complete reannotation of the Arabidopsis thaliana reference genome.</title>
        <authorList>
            <person name="Cheng C.Y."/>
            <person name="Krishnakumar V."/>
            <person name="Chan A.P."/>
            <person name="Thibaud-Nissen F."/>
            <person name="Schobel S."/>
            <person name="Town C.D."/>
        </authorList>
    </citation>
    <scope>GENOME REANNOTATION</scope>
    <source>
        <strain>cv. Columbia</strain>
    </source>
</reference>
<reference key="3">
    <citation type="journal article" date="2003" name="Science">
        <title>Empirical analysis of transcriptional activity in the Arabidopsis genome.</title>
        <authorList>
            <person name="Yamada K."/>
            <person name="Lim J."/>
            <person name="Dale J.M."/>
            <person name="Chen H."/>
            <person name="Shinn P."/>
            <person name="Palm C.J."/>
            <person name="Southwick A.M."/>
            <person name="Wu H.C."/>
            <person name="Kim C.J."/>
            <person name="Nguyen M."/>
            <person name="Pham P.K."/>
            <person name="Cheuk R.F."/>
            <person name="Karlin-Newmann G."/>
            <person name="Liu S.X."/>
            <person name="Lam B."/>
            <person name="Sakano H."/>
            <person name="Wu T."/>
            <person name="Yu G."/>
            <person name="Miranda M."/>
            <person name="Quach H.L."/>
            <person name="Tripp M."/>
            <person name="Chang C.H."/>
            <person name="Lee J.M."/>
            <person name="Toriumi M.J."/>
            <person name="Chan M.M."/>
            <person name="Tang C.C."/>
            <person name="Onodera C.S."/>
            <person name="Deng J.M."/>
            <person name="Akiyama K."/>
            <person name="Ansari Y."/>
            <person name="Arakawa T."/>
            <person name="Banh J."/>
            <person name="Banno F."/>
            <person name="Bowser L."/>
            <person name="Brooks S.Y."/>
            <person name="Carninci P."/>
            <person name="Chao Q."/>
            <person name="Choy N."/>
            <person name="Enju A."/>
            <person name="Goldsmith A.D."/>
            <person name="Gurjal M."/>
            <person name="Hansen N.F."/>
            <person name="Hayashizaki Y."/>
            <person name="Johnson-Hopson C."/>
            <person name="Hsuan V.W."/>
            <person name="Iida K."/>
            <person name="Karnes M."/>
            <person name="Khan S."/>
            <person name="Koesema E."/>
            <person name="Ishida J."/>
            <person name="Jiang P.X."/>
            <person name="Jones T."/>
            <person name="Kawai J."/>
            <person name="Kamiya A."/>
            <person name="Meyers C."/>
            <person name="Nakajima M."/>
            <person name="Narusaka M."/>
            <person name="Seki M."/>
            <person name="Sakurai T."/>
            <person name="Satou M."/>
            <person name="Tamse R."/>
            <person name="Vaysberg M."/>
            <person name="Wallender E.K."/>
            <person name="Wong C."/>
            <person name="Yamamura Y."/>
            <person name="Yuan S."/>
            <person name="Shinozaki K."/>
            <person name="Davis R.W."/>
            <person name="Theologis A."/>
            <person name="Ecker J.R."/>
        </authorList>
    </citation>
    <scope>NUCLEOTIDE SEQUENCE [LARGE SCALE MRNA]</scope>
    <source>
        <strain>cv. Columbia</strain>
    </source>
</reference>
<reference key="4">
    <citation type="journal article" date="2003" name="DNA Res.">
        <title>Comprehensive analysis of NAC family genes in Oryza sativa and Arabidopsis thaliana.</title>
        <authorList>
            <person name="Ooka H."/>
            <person name="Satoh K."/>
            <person name="Doi K."/>
            <person name="Nagata T."/>
            <person name="Otomo Y."/>
            <person name="Murakami K."/>
            <person name="Matsubara K."/>
            <person name="Osato N."/>
            <person name="Kawai J."/>
            <person name="Carninci P."/>
            <person name="Hayashizaki Y."/>
            <person name="Suzuki K."/>
            <person name="Kojima K."/>
            <person name="Takahara Y."/>
            <person name="Yamamoto K."/>
            <person name="Kikuchi S."/>
        </authorList>
    </citation>
    <scope>GENE FAMILY</scope>
    <scope>NOMENCLATURE</scope>
</reference>
<reference key="5">
    <citation type="journal article" date="2007" name="Nucleic Acids Res.">
        <title>Exploring membrane-associated NAC transcription factors in Arabidopsis: implications for membrane biology in genome regulation.</title>
        <authorList>
            <person name="Kim S.Y."/>
            <person name="Kim S.G."/>
            <person name="Kim Y.S."/>
            <person name="Seo P.J."/>
            <person name="Bae M."/>
            <person name="Yoon H.K."/>
            <person name="Park C.M."/>
        </authorList>
    </citation>
    <scope>GENE FAMILY</scope>
    <scope>NOMENCLATURE</scope>
    <scope>TISSUE SPECIFICITY</scope>
    <scope>INDUCTION</scope>
</reference>
<reference key="6">
    <citation type="journal article" date="2013" name="Plant Cell">
        <title>The membrane-bound NAC transcription factor ANAC013 functions in mitochondrial retrograde regulation of the oxidative stress response in Arabidopsis.</title>
        <authorList>
            <person name="De Clercq I."/>
            <person name="Vermeirssen V."/>
            <person name="Van Aken O."/>
            <person name="Vandepoele K."/>
            <person name="Murcha M.W."/>
            <person name="Law S.R."/>
            <person name="Inze A."/>
            <person name="Ng S."/>
            <person name="Ivanova A."/>
            <person name="Rombaut D."/>
            <person name="van de Cotte B."/>
            <person name="Jaspers P."/>
            <person name="Van de Peer Y."/>
            <person name="Kangasjaervi J."/>
            <person name="Whelan J."/>
            <person name="Van Breusegem F."/>
        </authorList>
    </citation>
    <scope>FUNCTION</scope>
    <scope>SUBCELLULAR LOCATION</scope>
</reference>
<reference key="7">
    <citation type="journal article" date="2015" name="Biochem. J.">
        <title>Protein intrinsic disorder in Arabidopsis NAC transcription factors: transcriptional activation by ANAC013 and ANAC046 and their interactions with RCD1.</title>
        <authorList>
            <person name="O'Shea C."/>
            <person name="Kryger M."/>
            <person name="Stender E.G."/>
            <person name="Kragelund B.B."/>
            <person name="Willemoes M."/>
            <person name="Skriver K."/>
        </authorList>
    </citation>
    <scope>INTERACTION WITH RCD1</scope>
</reference>
<feature type="chain" id="PRO_0000432440" description="NAC domain-containing protein 13">
    <location>
        <begin position="1"/>
        <end position="528"/>
    </location>
</feature>
<feature type="transmembrane region" description="Helical" evidence="1">
    <location>
        <begin position="499"/>
        <end position="519"/>
    </location>
</feature>
<feature type="domain" description="NAC" evidence="2">
    <location>
        <begin position="10"/>
        <end position="160"/>
    </location>
</feature>
<feature type="DNA-binding region" evidence="2">
    <location>
        <begin position="107"/>
        <end position="166"/>
    </location>
</feature>
<feature type="region of interest" description="Disordered" evidence="3">
    <location>
        <begin position="388"/>
        <end position="419"/>
    </location>
</feature>
<feature type="sequence conflict" description="In Ref. 3; AAK59465." evidence="9" ref="3">
    <original>E</original>
    <variation>G</variation>
    <location>
        <position position="272"/>
    </location>
</feature>
<keyword id="KW-0010">Activator</keyword>
<keyword id="KW-0025">Alternative splicing</keyword>
<keyword id="KW-0238">DNA-binding</keyword>
<keyword id="KW-0256">Endoplasmic reticulum</keyword>
<keyword id="KW-0472">Membrane</keyword>
<keyword id="KW-0539">Nucleus</keyword>
<keyword id="KW-1185">Reference proteome</keyword>
<keyword id="KW-0346">Stress response</keyword>
<keyword id="KW-0804">Transcription</keyword>
<keyword id="KW-0805">Transcription regulation</keyword>
<keyword id="KW-0812">Transmembrane</keyword>
<keyword id="KW-1133">Transmembrane helix</keyword>
<comment type="function">
    <text evidence="5">Transcriptional activator activated by proteolytic cleavage through regulated intramembrane proteolysis (RIP). Involved in oxidative stress tolerance by mediating regulation of mitochondrial retrograde signaling during mitochondrial dysfunction. Interacts directly with the mitochondrial dysfunction DNA consensus motif 5'-CTTGNNNNNCA[AC]G-3', a cis-regulatory elements of several mitochondrial retrograde regulation-induced genes, and triggers increased oxidative stress tolerance.</text>
</comment>
<comment type="subunit">
    <text evidence="6">Interacts with RCD1.</text>
</comment>
<comment type="subcellular location">
    <subcellularLocation>
        <location evidence="5">Endoplasmic reticulum membrane</location>
        <topology evidence="1">Single-pass membrane protein</topology>
    </subcellularLocation>
    <subcellularLocation>
        <location evidence="2 5">Nucleus</location>
    </subcellularLocation>
    <text evidence="5">Localized primarily in endoplasmic reticulum membrane as dormant form and, upon oxidative stress, is processed into a transcriptionally active and nuclear form after a proteolytic cleavage through regulated intramembrane proteolysis (RIP).</text>
</comment>
<comment type="alternative products">
    <event type="alternative splicing"/>
    <isoform>
        <id>F4IED2-1</id>
        <name>1</name>
        <sequence type="displayed"/>
    </isoform>
    <text evidence="9">A number of isoforms are produced. According to EST sequences.</text>
</comment>
<comment type="tissue specificity">
    <text evidence="4">Expressed in roots, rosette leaves, shoot apex, stems and flowers.</text>
</comment>
<comment type="induction">
    <text evidence="4">By heat, salt stress, abscisic acid (ABA) and methyl methanesulfonate (MMS) treatment.</text>
</comment>
<comment type="domain">
    <text evidence="2">The NAC domain includes a DNA binding domain and a dimerization domain.</text>
</comment>
<comment type="sequence caution" evidence="9">
    <conflict type="erroneous gene model prediction">
        <sequence resource="EMBL-CDS" id="AAF31294"/>
    </conflict>
</comment>
<comment type="sequence caution" evidence="9">
    <conflict type="erroneous gene model prediction">
        <sequence resource="EMBL-CDS" id="AEE31535"/>
    </conflict>
</comment>
<accession>F4IED2</accession>
<accession>Q94CC7</accession>
<accession>Q9MAQ1</accession>
<name>NAC13_ARATH</name>
<dbReference type="EMBL" id="AC006424">
    <property type="protein sequence ID" value="AAF31294.1"/>
    <property type="status" value="ALT_SEQ"/>
    <property type="molecule type" value="Genomic_DNA"/>
</dbReference>
<dbReference type="EMBL" id="CP002684">
    <property type="protein sequence ID" value="AEE31534.1"/>
    <property type="molecule type" value="Genomic_DNA"/>
</dbReference>
<dbReference type="EMBL" id="CP002684">
    <property type="protein sequence ID" value="AEE31535.1"/>
    <property type="status" value="ALT_SEQ"/>
    <property type="molecule type" value="Genomic_DNA"/>
</dbReference>
<dbReference type="EMBL" id="AY034959">
    <property type="protein sequence ID" value="AAK59465.1"/>
    <property type="molecule type" value="mRNA"/>
</dbReference>
<dbReference type="PIR" id="E86453">
    <property type="entry name" value="E86453"/>
</dbReference>
<dbReference type="RefSeq" id="NP_564410.1">
    <molecule id="F4IED2-1"/>
    <property type="nucleotide sequence ID" value="NM_103021.4"/>
</dbReference>
<dbReference type="SASBDB" id="F4IED2"/>
<dbReference type="SMR" id="F4IED2"/>
<dbReference type="FunCoup" id="F4IED2">
    <property type="interactions" value="9"/>
</dbReference>
<dbReference type="IntAct" id="F4IED2">
    <property type="interactions" value="1"/>
</dbReference>
<dbReference type="STRING" id="3702.F4IED2"/>
<dbReference type="PaxDb" id="3702-AT1G32870.1"/>
<dbReference type="ProteomicsDB" id="251232">
    <molecule id="F4IED2-1"/>
</dbReference>
<dbReference type="EnsemblPlants" id="AT1G32870.1">
    <molecule id="F4IED2-1"/>
    <property type="protein sequence ID" value="AT1G32870.1"/>
    <property type="gene ID" value="AT1G32870"/>
</dbReference>
<dbReference type="GeneID" id="840181"/>
<dbReference type="Gramene" id="AT1G32870.1">
    <molecule id="F4IED2-1"/>
    <property type="protein sequence ID" value="AT1G32870.1"/>
    <property type="gene ID" value="AT1G32870"/>
</dbReference>
<dbReference type="KEGG" id="ath:AT1G32870"/>
<dbReference type="Araport" id="AT1G32870"/>
<dbReference type="TAIR" id="AT1G32870">
    <property type="gene designation" value="NAC13"/>
</dbReference>
<dbReference type="eggNOG" id="ENOG502QT9T">
    <property type="taxonomic scope" value="Eukaryota"/>
</dbReference>
<dbReference type="InParanoid" id="F4IED2"/>
<dbReference type="OMA" id="SESWTHE"/>
<dbReference type="PRO" id="PR:F4IED2"/>
<dbReference type="Proteomes" id="UP000006548">
    <property type="component" value="Chromosome 1"/>
</dbReference>
<dbReference type="ExpressionAtlas" id="F4IED2">
    <property type="expression patterns" value="baseline and differential"/>
</dbReference>
<dbReference type="GO" id="GO:0005737">
    <property type="term" value="C:cytoplasm"/>
    <property type="evidence" value="ECO:0000314"/>
    <property type="project" value="TAIR"/>
</dbReference>
<dbReference type="GO" id="GO:0005789">
    <property type="term" value="C:endoplasmic reticulum membrane"/>
    <property type="evidence" value="ECO:0000314"/>
    <property type="project" value="UniProtKB"/>
</dbReference>
<dbReference type="GO" id="GO:0005634">
    <property type="term" value="C:nucleus"/>
    <property type="evidence" value="ECO:0000314"/>
    <property type="project" value="UniProtKB"/>
</dbReference>
<dbReference type="GO" id="GO:0003700">
    <property type="term" value="F:DNA-binding transcription factor activity"/>
    <property type="evidence" value="ECO:0000314"/>
    <property type="project" value="UniProtKB"/>
</dbReference>
<dbReference type="GO" id="GO:0000976">
    <property type="term" value="F:transcription cis-regulatory region binding"/>
    <property type="evidence" value="ECO:0000353"/>
    <property type="project" value="TAIR"/>
</dbReference>
<dbReference type="GO" id="GO:0031930">
    <property type="term" value="P:mitochondria-nucleus signaling pathway"/>
    <property type="evidence" value="ECO:0000314"/>
    <property type="project" value="UniProtKB"/>
</dbReference>
<dbReference type="GO" id="GO:1900409">
    <property type="term" value="P:positive regulation of cellular response to oxidative stress"/>
    <property type="evidence" value="ECO:0000314"/>
    <property type="project" value="UniProtKB"/>
</dbReference>
<dbReference type="GO" id="GO:0010114">
    <property type="term" value="P:response to red light"/>
    <property type="evidence" value="ECO:0000270"/>
    <property type="project" value="TAIR"/>
</dbReference>
<dbReference type="GO" id="GO:0010224">
    <property type="term" value="P:response to UV-B"/>
    <property type="evidence" value="ECO:0000270"/>
    <property type="project" value="TAIR"/>
</dbReference>
<dbReference type="FunFam" id="2.170.150.80:FF:000006">
    <property type="entry name" value="NAC domain-containing protein 100-like"/>
    <property type="match status" value="1"/>
</dbReference>
<dbReference type="Gene3D" id="2.170.150.80">
    <property type="entry name" value="NAC domain"/>
    <property type="match status" value="1"/>
</dbReference>
<dbReference type="InterPro" id="IPR003441">
    <property type="entry name" value="NAC-dom"/>
</dbReference>
<dbReference type="InterPro" id="IPR036093">
    <property type="entry name" value="NAC_dom_sf"/>
</dbReference>
<dbReference type="PANTHER" id="PTHR31744:SF216">
    <property type="entry name" value="NAC TRANSCRIPTION FACTOR"/>
    <property type="match status" value="1"/>
</dbReference>
<dbReference type="PANTHER" id="PTHR31744">
    <property type="entry name" value="PROTEIN CUP-SHAPED COTYLEDON 2-RELATED"/>
    <property type="match status" value="1"/>
</dbReference>
<dbReference type="Pfam" id="PF02365">
    <property type="entry name" value="NAM"/>
    <property type="match status" value="1"/>
</dbReference>
<dbReference type="SUPFAM" id="SSF101941">
    <property type="entry name" value="NAC domain"/>
    <property type="match status" value="1"/>
</dbReference>
<dbReference type="PROSITE" id="PS51005">
    <property type="entry name" value="NAC"/>
    <property type="match status" value="1"/>
</dbReference>
<evidence type="ECO:0000255" key="1"/>
<evidence type="ECO:0000255" key="2">
    <source>
        <dbReference type="PROSITE-ProRule" id="PRU00353"/>
    </source>
</evidence>
<evidence type="ECO:0000256" key="3">
    <source>
        <dbReference type="SAM" id="MobiDB-lite"/>
    </source>
</evidence>
<evidence type="ECO:0000269" key="4">
    <source>
    </source>
</evidence>
<evidence type="ECO:0000269" key="5">
    <source>
    </source>
</evidence>
<evidence type="ECO:0000269" key="6">
    <source>
    </source>
</evidence>
<evidence type="ECO:0000303" key="7">
    <source>
    </source>
</evidence>
<evidence type="ECO:0000303" key="8">
    <source>
    </source>
</evidence>
<evidence type="ECO:0000305" key="9"/>
<evidence type="ECO:0000312" key="10">
    <source>
        <dbReference type="Araport" id="AT1G32870"/>
    </source>
</evidence>
<evidence type="ECO:0000312" key="11">
    <source>
        <dbReference type="EMBL" id="AAF31294.1"/>
    </source>
</evidence>
<evidence type="ECO:0000312" key="12">
    <source>
        <dbReference type="EMBL" id="AEE31534.1"/>
    </source>
</evidence>
<proteinExistence type="evidence at protein level"/>
<protein>
    <recommendedName>
        <fullName evidence="7">NAC domain-containing protein 13</fullName>
        <shortName evidence="7">ANAC013</shortName>
    </recommendedName>
    <alternativeName>
        <fullName evidence="8">Protein NTM1-like 1</fullName>
    </alternativeName>
</protein>
<sequence>MDLSVENGGLAPGFRFHPTDEELVVYYLKRKIRRKKLRVEAIGETDVYKFDPEELPEKALYKTRDRQWFFFSLRDRKHGSRSSRATERGYWKATGKDRVIHCDSRPVGEKKTLVFHRGRAPNGERTNWVMHEYTLHKEELKRCGGEDVKDAYVLYKIYKKSGSGPKNGEQYGAPFIEEEWAEDDDDDVDEPANQLVVSASVDNSLWGKGLNQSELDDNDIEELMSQVRDQSGPTLQQNGVSGLNSHVDTYNLENLEEDMYLEINDLMEPEPEPTSVEVMENNWNEDGSGLLNDDDFVGADSYFLDLGVTNPQLDFVSGDLKNGFAQSLQVNTSLMTYQANNNQFQQQSGKNQASNWPLRNSYTRQINNGSSWVQELNNDGLTVTRFGEAPGTGDSSEFLNPVPSGISTTNEDDPSKDESSKFASSVWTFLESIPAKPAYASENPFVKLNLVRMSTSGGRFRFTSKSTGNNVVVMDSDSAVKRNKSGGNNDKKKKKNKGFFCLSIIGALCALFWVIIGTMGGSGRPLLW</sequence>